<keyword id="KW-0002">3D-structure</keyword>
<keyword id="KW-0030">Aminoacyl-tRNA synthetase</keyword>
<keyword id="KW-0067">ATP-binding</keyword>
<keyword id="KW-0963">Cytoplasm</keyword>
<keyword id="KW-0436">Ligase</keyword>
<keyword id="KW-0547">Nucleotide-binding</keyword>
<keyword id="KW-0648">Protein biosynthesis</keyword>
<keyword id="KW-1185">Reference proteome</keyword>
<dbReference type="EC" id="6.1.1.17" evidence="1"/>
<dbReference type="EMBL" id="CP001173">
    <property type="protein sequence ID" value="ACI27198.1"/>
    <property type="molecule type" value="Genomic_DNA"/>
</dbReference>
<dbReference type="RefSeq" id="WP_000053235.1">
    <property type="nucleotide sequence ID" value="NC_011333.1"/>
</dbReference>
<dbReference type="PDB" id="6B1P">
    <property type="method" value="X-ray"/>
    <property type="resolution" value="2.50 A"/>
    <property type="chains" value="A=1-463"/>
</dbReference>
<dbReference type="PDBsum" id="6B1P"/>
<dbReference type="SMR" id="B5Z6J9"/>
<dbReference type="KEGG" id="hpg:HPG27_434"/>
<dbReference type="HOGENOM" id="CLU_015768_6_3_7"/>
<dbReference type="Proteomes" id="UP000001735">
    <property type="component" value="Chromosome"/>
</dbReference>
<dbReference type="GO" id="GO:0005829">
    <property type="term" value="C:cytosol"/>
    <property type="evidence" value="ECO:0007669"/>
    <property type="project" value="TreeGrafter"/>
</dbReference>
<dbReference type="GO" id="GO:0005524">
    <property type="term" value="F:ATP binding"/>
    <property type="evidence" value="ECO:0007669"/>
    <property type="project" value="UniProtKB-UniRule"/>
</dbReference>
<dbReference type="GO" id="GO:0004818">
    <property type="term" value="F:glutamate-tRNA ligase activity"/>
    <property type="evidence" value="ECO:0007669"/>
    <property type="project" value="UniProtKB-UniRule"/>
</dbReference>
<dbReference type="GO" id="GO:0000049">
    <property type="term" value="F:tRNA binding"/>
    <property type="evidence" value="ECO:0007669"/>
    <property type="project" value="InterPro"/>
</dbReference>
<dbReference type="GO" id="GO:0008270">
    <property type="term" value="F:zinc ion binding"/>
    <property type="evidence" value="ECO:0007669"/>
    <property type="project" value="InterPro"/>
</dbReference>
<dbReference type="GO" id="GO:0006424">
    <property type="term" value="P:glutamyl-tRNA aminoacylation"/>
    <property type="evidence" value="ECO:0007669"/>
    <property type="project" value="UniProtKB-UniRule"/>
</dbReference>
<dbReference type="CDD" id="cd00808">
    <property type="entry name" value="GluRS_core"/>
    <property type="match status" value="1"/>
</dbReference>
<dbReference type="FunFam" id="3.40.50.620:FF:000288">
    <property type="entry name" value="Glutamate--tRNA ligase 1"/>
    <property type="match status" value="1"/>
</dbReference>
<dbReference type="Gene3D" id="1.10.10.350">
    <property type="match status" value="1"/>
</dbReference>
<dbReference type="Gene3D" id="3.40.50.620">
    <property type="entry name" value="HUPs"/>
    <property type="match status" value="1"/>
</dbReference>
<dbReference type="HAMAP" id="MF_00022">
    <property type="entry name" value="Glu_tRNA_synth_type1"/>
    <property type="match status" value="1"/>
</dbReference>
<dbReference type="InterPro" id="IPR045462">
    <property type="entry name" value="aa-tRNA-synth_I_cd-bd"/>
</dbReference>
<dbReference type="InterPro" id="IPR020751">
    <property type="entry name" value="aa-tRNA-synth_I_codon-bd_sub2"/>
</dbReference>
<dbReference type="InterPro" id="IPR001412">
    <property type="entry name" value="aa-tRNA-synth_I_CS"/>
</dbReference>
<dbReference type="InterPro" id="IPR008925">
    <property type="entry name" value="aa_tRNA-synth_I_cd-bd_sf"/>
</dbReference>
<dbReference type="InterPro" id="IPR004527">
    <property type="entry name" value="Glu-tRNA-ligase_bac/mito"/>
</dbReference>
<dbReference type="InterPro" id="IPR000924">
    <property type="entry name" value="Glu/Gln-tRNA-synth"/>
</dbReference>
<dbReference type="InterPro" id="IPR020058">
    <property type="entry name" value="Glu/Gln-tRNA-synth_Ib_cat-dom"/>
</dbReference>
<dbReference type="InterPro" id="IPR049940">
    <property type="entry name" value="GluQ/Sye"/>
</dbReference>
<dbReference type="InterPro" id="IPR033910">
    <property type="entry name" value="GluRS_core"/>
</dbReference>
<dbReference type="InterPro" id="IPR014729">
    <property type="entry name" value="Rossmann-like_a/b/a_fold"/>
</dbReference>
<dbReference type="NCBIfam" id="TIGR00464">
    <property type="entry name" value="gltX_bact"/>
    <property type="match status" value="1"/>
</dbReference>
<dbReference type="NCBIfam" id="NF004314">
    <property type="entry name" value="PRK05710.1-3"/>
    <property type="match status" value="1"/>
</dbReference>
<dbReference type="PANTHER" id="PTHR43311">
    <property type="entry name" value="GLUTAMATE--TRNA LIGASE"/>
    <property type="match status" value="1"/>
</dbReference>
<dbReference type="PANTHER" id="PTHR43311:SF2">
    <property type="entry name" value="GLUTAMATE--TRNA LIGASE, MITOCHONDRIAL-RELATED"/>
    <property type="match status" value="1"/>
</dbReference>
<dbReference type="Pfam" id="PF19269">
    <property type="entry name" value="Anticodon_2"/>
    <property type="match status" value="1"/>
</dbReference>
<dbReference type="Pfam" id="PF00749">
    <property type="entry name" value="tRNA-synt_1c"/>
    <property type="match status" value="1"/>
</dbReference>
<dbReference type="PRINTS" id="PR00987">
    <property type="entry name" value="TRNASYNTHGLU"/>
</dbReference>
<dbReference type="SUPFAM" id="SSF48163">
    <property type="entry name" value="An anticodon-binding domain of class I aminoacyl-tRNA synthetases"/>
    <property type="match status" value="1"/>
</dbReference>
<dbReference type="SUPFAM" id="SSF52374">
    <property type="entry name" value="Nucleotidylyl transferase"/>
    <property type="match status" value="1"/>
</dbReference>
<dbReference type="PROSITE" id="PS00178">
    <property type="entry name" value="AA_TRNA_LIGASE_I"/>
    <property type="match status" value="1"/>
</dbReference>
<reference key="1">
    <citation type="journal article" date="2009" name="J. Bacteriol.">
        <title>The complete genome sequence of Helicobacter pylori strain G27.</title>
        <authorList>
            <person name="Baltrus D.A."/>
            <person name="Amieva M.R."/>
            <person name="Covacci A."/>
            <person name="Lowe T.M."/>
            <person name="Merrell D.S."/>
            <person name="Ottemann K.M."/>
            <person name="Stein M."/>
            <person name="Salama N.R."/>
            <person name="Guillemin K."/>
        </authorList>
    </citation>
    <scope>NUCLEOTIDE SEQUENCE [LARGE SCALE GENOMIC DNA]</scope>
    <source>
        <strain>G27</strain>
    </source>
</reference>
<organism>
    <name type="scientific">Helicobacter pylori (strain G27)</name>
    <dbReference type="NCBI Taxonomy" id="563041"/>
    <lineage>
        <taxon>Bacteria</taxon>
        <taxon>Pseudomonadati</taxon>
        <taxon>Campylobacterota</taxon>
        <taxon>Epsilonproteobacteria</taxon>
        <taxon>Campylobacterales</taxon>
        <taxon>Helicobacteraceae</taxon>
        <taxon>Helicobacter</taxon>
    </lineage>
</organism>
<comment type="function">
    <text evidence="1">Catalyzes the attachment of glutamate to tRNA(Glu) in a two-step reaction: glutamate is first activated by ATP to form Glu-AMP and then transferred to the acceptor end of tRNA(Glu).</text>
</comment>
<comment type="catalytic activity">
    <reaction evidence="1">
        <text>tRNA(Glu) + L-glutamate + ATP = L-glutamyl-tRNA(Glu) + AMP + diphosphate</text>
        <dbReference type="Rhea" id="RHEA:23540"/>
        <dbReference type="Rhea" id="RHEA-COMP:9663"/>
        <dbReference type="Rhea" id="RHEA-COMP:9680"/>
        <dbReference type="ChEBI" id="CHEBI:29985"/>
        <dbReference type="ChEBI" id="CHEBI:30616"/>
        <dbReference type="ChEBI" id="CHEBI:33019"/>
        <dbReference type="ChEBI" id="CHEBI:78442"/>
        <dbReference type="ChEBI" id="CHEBI:78520"/>
        <dbReference type="ChEBI" id="CHEBI:456215"/>
        <dbReference type="EC" id="6.1.1.17"/>
    </reaction>
</comment>
<comment type="subunit">
    <text evidence="1">Monomer.</text>
</comment>
<comment type="subcellular location">
    <subcellularLocation>
        <location evidence="1">Cytoplasm</location>
    </subcellularLocation>
</comment>
<comment type="similarity">
    <text evidence="1">Belongs to the class-I aminoacyl-tRNA synthetase family. Glutamate--tRNA ligase type 1 subfamily.</text>
</comment>
<accession>B5Z6J9</accession>
<gene>
    <name evidence="1" type="primary">gltX1</name>
    <name type="ordered locus">HPG27_434</name>
</gene>
<evidence type="ECO:0000255" key="1">
    <source>
        <dbReference type="HAMAP-Rule" id="MF_00022"/>
    </source>
</evidence>
<evidence type="ECO:0007829" key="2">
    <source>
        <dbReference type="PDB" id="6B1P"/>
    </source>
</evidence>
<proteinExistence type="evidence at protein level"/>
<sequence length="463" mass="53318">MSLIVTRFAPSPTGYLHIGGLRTAIFNYLFARANQGKFFLRIEDTDLSRNSIEAANAIIEAFKWVGLEYDGEILYQSKRFEIYKEYIQKLLDEDKAYYCYMSKDELDALREEQKARKETPRYDNRYRDFKGTPPKGIEPVVRIKVPQNEVIGFNDGVKGEVKVNTNELDDFIIARSDGTPTYNFVVIVDDALMGITDVIRGDDHLSNTPKQIVLYKALNFKIPNFFHVPMILNEEGQKLSKRHGATNVMDYQEMGYLKEALVNFLVRLGWSYQDKEIFSMQELLECFDPKDLNSSPSCFSWHKLNWLNAHYLKNQSAQKLLELLKPFSFSDLSHLNPAQLDRLLDALKERSQTLKELALKIDEVLIAPVEYEEKVFKKLNQALIMPLLEKFKLELKEANFNDESALENAMHKIIEEEKIKAGSFMQPLRLALLGKGGGIGLKEALFILGKTESVKRIENFLKN</sequence>
<name>SYE1_HELPG</name>
<protein>
    <recommendedName>
        <fullName evidence="1">Glutamate--tRNA ligase 1</fullName>
        <ecNumber evidence="1">6.1.1.17</ecNumber>
    </recommendedName>
    <alternativeName>
        <fullName evidence="1">Glutamyl-tRNA synthetase 1</fullName>
        <shortName evidence="1">GluRS 1</shortName>
    </alternativeName>
</protein>
<feature type="chain" id="PRO_0000367681" description="Glutamate--tRNA ligase 1">
    <location>
        <begin position="1"/>
        <end position="463"/>
    </location>
</feature>
<feature type="short sequence motif" description="'HIGH' region" evidence="1">
    <location>
        <begin position="10"/>
        <end position="20"/>
    </location>
</feature>
<feature type="short sequence motif" description="'KMSKS' region" evidence="1">
    <location>
        <begin position="238"/>
        <end position="242"/>
    </location>
</feature>
<feature type="binding site" evidence="1">
    <location>
        <position position="241"/>
    </location>
    <ligand>
        <name>ATP</name>
        <dbReference type="ChEBI" id="CHEBI:30616"/>
    </ligand>
</feature>
<feature type="strand" evidence="2">
    <location>
        <begin position="5"/>
        <end position="8"/>
    </location>
</feature>
<feature type="helix" evidence="2">
    <location>
        <begin position="18"/>
        <end position="33"/>
    </location>
</feature>
<feature type="strand" evidence="2">
    <location>
        <begin position="37"/>
        <end position="42"/>
    </location>
</feature>
<feature type="helix" evidence="2">
    <location>
        <begin position="49"/>
        <end position="65"/>
    </location>
</feature>
<feature type="strand" evidence="2">
    <location>
        <begin position="74"/>
        <end position="76"/>
    </location>
</feature>
<feature type="helix" evidence="2">
    <location>
        <begin position="77"/>
        <end position="79"/>
    </location>
</feature>
<feature type="helix" evidence="2">
    <location>
        <begin position="80"/>
        <end position="92"/>
    </location>
</feature>
<feature type="strand" evidence="2">
    <location>
        <begin position="95"/>
        <end position="99"/>
    </location>
</feature>
<feature type="helix" evidence="2">
    <location>
        <begin position="103"/>
        <end position="110"/>
    </location>
</feature>
<feature type="strand" evidence="2">
    <location>
        <begin position="140"/>
        <end position="143"/>
    </location>
</feature>
<feature type="strand" evidence="2">
    <location>
        <begin position="150"/>
        <end position="155"/>
    </location>
</feature>
<feature type="turn" evidence="2">
    <location>
        <begin position="156"/>
        <end position="158"/>
    </location>
</feature>
<feature type="strand" evidence="2">
    <location>
        <begin position="159"/>
        <end position="164"/>
    </location>
</feature>
<feature type="helix" evidence="2">
    <location>
        <begin position="165"/>
        <end position="167"/>
    </location>
</feature>
<feature type="strand" evidence="2">
    <location>
        <begin position="172"/>
        <end position="174"/>
    </location>
</feature>
<feature type="helix" evidence="2">
    <location>
        <begin position="182"/>
        <end position="192"/>
    </location>
</feature>
<feature type="strand" evidence="2">
    <location>
        <begin position="197"/>
        <end position="201"/>
    </location>
</feature>
<feature type="helix" evidence="2">
    <location>
        <begin position="202"/>
        <end position="205"/>
    </location>
</feature>
<feature type="helix" evidence="2">
    <location>
        <begin position="207"/>
        <end position="217"/>
    </location>
</feature>
<feature type="strand" evidence="2">
    <location>
        <begin position="224"/>
        <end position="228"/>
    </location>
</feature>
<feature type="turn" evidence="2">
    <location>
        <begin position="241"/>
        <end position="243"/>
    </location>
</feature>
<feature type="helix" evidence="2">
    <location>
        <begin position="248"/>
        <end position="254"/>
    </location>
</feature>
<feature type="helix" evidence="2">
    <location>
        <begin position="258"/>
        <end position="266"/>
    </location>
</feature>
<feature type="strand" evidence="2">
    <location>
        <begin position="268"/>
        <end position="270"/>
    </location>
</feature>
<feature type="strand" evidence="2">
    <location>
        <begin position="272"/>
        <end position="274"/>
    </location>
</feature>
<feature type="helix" evidence="2">
    <location>
        <begin position="280"/>
        <end position="286"/>
    </location>
</feature>
<feature type="helix" evidence="2">
    <location>
        <begin position="289"/>
        <end position="291"/>
    </location>
</feature>
<feature type="helix" evidence="2">
    <location>
        <begin position="301"/>
        <end position="313"/>
    </location>
</feature>
<feature type="helix" evidence="2">
    <location>
        <begin position="318"/>
        <end position="323"/>
    </location>
</feature>
<feature type="turn" evidence="2">
    <location>
        <begin position="325"/>
        <end position="327"/>
    </location>
</feature>
<feature type="helix" evidence="2">
    <location>
        <begin position="342"/>
        <end position="348"/>
    </location>
</feature>
<feature type="helix" evidence="2">
    <location>
        <begin position="354"/>
        <end position="365"/>
    </location>
</feature>
<feature type="helix" evidence="2">
    <location>
        <begin position="373"/>
        <end position="376"/>
    </location>
</feature>
<feature type="helix" evidence="2">
    <location>
        <begin position="381"/>
        <end position="397"/>
    </location>
</feature>
<feature type="helix" evidence="2">
    <location>
        <begin position="421"/>
        <end position="432"/>
    </location>
</feature>
<feature type="strand" evidence="2">
    <location>
        <begin position="435"/>
        <end position="437"/>
    </location>
</feature>
<feature type="helix" evidence="2">
    <location>
        <begin position="441"/>
        <end position="447"/>
    </location>
</feature>
<feature type="helix" evidence="2">
    <location>
        <begin position="450"/>
        <end position="461"/>
    </location>
</feature>